<organism>
    <name type="scientific">Pseudomonas syringae pv. syringae (strain B728a)</name>
    <dbReference type="NCBI Taxonomy" id="205918"/>
    <lineage>
        <taxon>Bacteria</taxon>
        <taxon>Pseudomonadati</taxon>
        <taxon>Pseudomonadota</taxon>
        <taxon>Gammaproteobacteria</taxon>
        <taxon>Pseudomonadales</taxon>
        <taxon>Pseudomonadaceae</taxon>
        <taxon>Pseudomonas</taxon>
        <taxon>Pseudomonas syringae</taxon>
    </lineage>
</organism>
<feature type="chain" id="PRO_0000205475" description="Probable alpha-L-glutamate ligase">
    <location>
        <begin position="1"/>
        <end position="301"/>
    </location>
</feature>
<feature type="domain" description="ATP-grasp" evidence="1">
    <location>
        <begin position="104"/>
        <end position="287"/>
    </location>
</feature>
<feature type="binding site" evidence="1">
    <location>
        <position position="141"/>
    </location>
    <ligand>
        <name>ATP</name>
        <dbReference type="ChEBI" id="CHEBI:30616"/>
    </ligand>
</feature>
<feature type="binding site" evidence="1">
    <location>
        <begin position="178"/>
        <end position="179"/>
    </location>
    <ligand>
        <name>ATP</name>
        <dbReference type="ChEBI" id="CHEBI:30616"/>
    </ligand>
</feature>
<feature type="binding site" evidence="1">
    <location>
        <position position="187"/>
    </location>
    <ligand>
        <name>ATP</name>
        <dbReference type="ChEBI" id="CHEBI:30616"/>
    </ligand>
</feature>
<feature type="binding site" evidence="1">
    <location>
        <begin position="211"/>
        <end position="213"/>
    </location>
    <ligand>
        <name>ATP</name>
        <dbReference type="ChEBI" id="CHEBI:30616"/>
    </ligand>
</feature>
<feature type="binding site" evidence="1">
    <location>
        <position position="248"/>
    </location>
    <ligand>
        <name>Mg(2+)</name>
        <dbReference type="ChEBI" id="CHEBI:18420"/>
        <label>1</label>
    </ligand>
</feature>
<feature type="binding site" evidence="1">
    <location>
        <position position="248"/>
    </location>
    <ligand>
        <name>Mn(2+)</name>
        <dbReference type="ChEBI" id="CHEBI:29035"/>
        <label>1</label>
    </ligand>
</feature>
<feature type="binding site" evidence="1">
    <location>
        <position position="260"/>
    </location>
    <ligand>
        <name>Mg(2+)</name>
        <dbReference type="ChEBI" id="CHEBI:18420"/>
        <label>1</label>
    </ligand>
</feature>
<feature type="binding site" evidence="1">
    <location>
        <position position="260"/>
    </location>
    <ligand>
        <name>Mg(2+)</name>
        <dbReference type="ChEBI" id="CHEBI:18420"/>
        <label>2</label>
    </ligand>
</feature>
<feature type="binding site" evidence="1">
    <location>
        <position position="260"/>
    </location>
    <ligand>
        <name>Mn(2+)</name>
        <dbReference type="ChEBI" id="CHEBI:29035"/>
        <label>1</label>
    </ligand>
</feature>
<feature type="binding site" evidence="1">
    <location>
        <position position="260"/>
    </location>
    <ligand>
        <name>Mn(2+)</name>
        <dbReference type="ChEBI" id="CHEBI:29035"/>
        <label>2</label>
    </ligand>
</feature>
<feature type="binding site" evidence="1">
    <location>
        <position position="262"/>
    </location>
    <ligand>
        <name>Mg(2+)</name>
        <dbReference type="ChEBI" id="CHEBI:18420"/>
        <label>2</label>
    </ligand>
</feature>
<feature type="binding site" evidence="1">
    <location>
        <position position="262"/>
    </location>
    <ligand>
        <name>Mn(2+)</name>
        <dbReference type="ChEBI" id="CHEBI:29035"/>
        <label>2</label>
    </ligand>
</feature>
<proteinExistence type="inferred from homology"/>
<sequence>MKIAVLSRNPRLYSTRRLVEAGIERGHEMVVIDTLRAYMNIASHKPQIHYRGKPLEGFDAVIPRIGASVTFYGCAVLRQFEMMGVFPLNESVAIARSRDKLRSLQLLSRRGIGLPVTGFAHSPDDIPDLIQMVNGAPLVIKVLEGTQGIGVVLCETATAAESVIEAFMGLKQDIMVQEYIKEAGGADIRCFVVGDKVIASMKRQAKPGEFRSNLHRGGSASLIKITPEERMTALRAAKVMGLSVAGVDILRSNHGPLVMEVNSSPGLEGIEVTTSKDVAGMIIGYLEKNSGPHMTRTKGKG</sequence>
<accession>Q500C6</accession>
<name>RIMK_PSEU2</name>
<protein>
    <recommendedName>
        <fullName evidence="1">Probable alpha-L-glutamate ligase</fullName>
        <ecNumber evidence="1">6.3.2.-</ecNumber>
    </recommendedName>
</protein>
<comment type="cofactor">
    <cofactor evidence="1">
        <name>Mg(2+)</name>
        <dbReference type="ChEBI" id="CHEBI:18420"/>
    </cofactor>
    <cofactor evidence="1">
        <name>Mn(2+)</name>
        <dbReference type="ChEBI" id="CHEBI:29035"/>
    </cofactor>
    <text evidence="1">Binds 2 magnesium or manganese ions per subunit.</text>
</comment>
<comment type="similarity">
    <text evidence="1">Belongs to the RimK family.</text>
</comment>
<keyword id="KW-0067">ATP-binding</keyword>
<keyword id="KW-0436">Ligase</keyword>
<keyword id="KW-0460">Magnesium</keyword>
<keyword id="KW-0464">Manganese</keyword>
<keyword id="KW-0479">Metal-binding</keyword>
<keyword id="KW-0547">Nucleotide-binding</keyword>
<keyword id="KW-0648">Protein biosynthesis</keyword>
<reference key="1">
    <citation type="journal article" date="2005" name="Proc. Natl. Acad. Sci. U.S.A.">
        <title>Comparison of the complete genome sequences of Pseudomonas syringae pv. syringae B728a and pv. tomato DC3000.</title>
        <authorList>
            <person name="Feil H."/>
            <person name="Feil W.S."/>
            <person name="Chain P."/>
            <person name="Larimer F."/>
            <person name="Dibartolo G."/>
            <person name="Copeland A."/>
            <person name="Lykidis A."/>
            <person name="Trong S."/>
            <person name="Nolan M."/>
            <person name="Goltsman E."/>
            <person name="Thiel J."/>
            <person name="Malfatti S."/>
            <person name="Loper J.E."/>
            <person name="Lapidus A."/>
            <person name="Detter J.C."/>
            <person name="Land M."/>
            <person name="Richardson P.M."/>
            <person name="Kyrpides N.C."/>
            <person name="Ivanova N."/>
            <person name="Lindow S.E."/>
        </authorList>
    </citation>
    <scope>NUCLEOTIDE SEQUENCE [LARGE SCALE GENOMIC DNA]</scope>
    <source>
        <strain>B728a</strain>
    </source>
</reference>
<evidence type="ECO:0000255" key="1">
    <source>
        <dbReference type="HAMAP-Rule" id="MF_01552"/>
    </source>
</evidence>
<dbReference type="EC" id="6.3.2.-" evidence="1"/>
<dbReference type="EMBL" id="CP000075">
    <property type="protein sequence ID" value="AAY35246.1"/>
    <property type="molecule type" value="Genomic_DNA"/>
</dbReference>
<dbReference type="RefSeq" id="WP_003401760.1">
    <property type="nucleotide sequence ID" value="NC_007005.1"/>
</dbReference>
<dbReference type="RefSeq" id="YP_233284.1">
    <property type="nucleotide sequence ID" value="NC_007005.1"/>
</dbReference>
<dbReference type="SMR" id="Q500C6"/>
<dbReference type="STRING" id="205918.Psyr_0173"/>
<dbReference type="KEGG" id="psb:Psyr_0173"/>
<dbReference type="PATRIC" id="fig|205918.7.peg.169"/>
<dbReference type="eggNOG" id="COG0189">
    <property type="taxonomic scope" value="Bacteria"/>
</dbReference>
<dbReference type="HOGENOM" id="CLU_054353_0_1_6"/>
<dbReference type="OrthoDB" id="3865600at2"/>
<dbReference type="Proteomes" id="UP000000426">
    <property type="component" value="Chromosome"/>
</dbReference>
<dbReference type="GO" id="GO:0005737">
    <property type="term" value="C:cytoplasm"/>
    <property type="evidence" value="ECO:0007669"/>
    <property type="project" value="TreeGrafter"/>
</dbReference>
<dbReference type="GO" id="GO:0005524">
    <property type="term" value="F:ATP binding"/>
    <property type="evidence" value="ECO:0007669"/>
    <property type="project" value="UniProtKB-UniRule"/>
</dbReference>
<dbReference type="GO" id="GO:0046872">
    <property type="term" value="F:metal ion binding"/>
    <property type="evidence" value="ECO:0007669"/>
    <property type="project" value="UniProtKB-KW"/>
</dbReference>
<dbReference type="GO" id="GO:0018169">
    <property type="term" value="F:ribosomal S6-glutamic acid ligase activity"/>
    <property type="evidence" value="ECO:0007669"/>
    <property type="project" value="TreeGrafter"/>
</dbReference>
<dbReference type="GO" id="GO:0036211">
    <property type="term" value="P:protein modification process"/>
    <property type="evidence" value="ECO:0007669"/>
    <property type="project" value="InterPro"/>
</dbReference>
<dbReference type="GO" id="GO:0009432">
    <property type="term" value="P:SOS response"/>
    <property type="evidence" value="ECO:0007669"/>
    <property type="project" value="TreeGrafter"/>
</dbReference>
<dbReference type="GO" id="GO:0006412">
    <property type="term" value="P:translation"/>
    <property type="evidence" value="ECO:0007669"/>
    <property type="project" value="UniProtKB-KW"/>
</dbReference>
<dbReference type="FunFam" id="3.40.50.20:FF:000004">
    <property type="entry name" value="Probable alpha-L-glutamate ligase"/>
    <property type="match status" value="1"/>
</dbReference>
<dbReference type="FunFam" id="3.30.1490.20:FF:000005">
    <property type="entry name" value="Probable alpha-L-glutamate ligase 1"/>
    <property type="match status" value="1"/>
</dbReference>
<dbReference type="FunFam" id="3.30.470.20:FF:000016">
    <property type="entry name" value="Ribosomal protein S6--L-glutamate ligase"/>
    <property type="match status" value="1"/>
</dbReference>
<dbReference type="Gene3D" id="3.40.50.20">
    <property type="match status" value="1"/>
</dbReference>
<dbReference type="Gene3D" id="3.30.1490.20">
    <property type="entry name" value="ATP-grasp fold, A domain"/>
    <property type="match status" value="1"/>
</dbReference>
<dbReference type="Gene3D" id="3.30.470.20">
    <property type="entry name" value="ATP-grasp fold, B domain"/>
    <property type="match status" value="1"/>
</dbReference>
<dbReference type="HAMAP" id="MF_01552">
    <property type="entry name" value="RimK"/>
    <property type="match status" value="1"/>
</dbReference>
<dbReference type="InterPro" id="IPR011761">
    <property type="entry name" value="ATP-grasp"/>
</dbReference>
<dbReference type="InterPro" id="IPR013651">
    <property type="entry name" value="ATP-grasp_RimK-type"/>
</dbReference>
<dbReference type="InterPro" id="IPR013815">
    <property type="entry name" value="ATP_grasp_subdomain_1"/>
</dbReference>
<dbReference type="InterPro" id="IPR023533">
    <property type="entry name" value="RimK"/>
</dbReference>
<dbReference type="InterPro" id="IPR041107">
    <property type="entry name" value="Rimk_N"/>
</dbReference>
<dbReference type="InterPro" id="IPR004666">
    <property type="entry name" value="Rp_bS6_RimK/Lys_biosynth_LsyX"/>
</dbReference>
<dbReference type="NCBIfam" id="NF007764">
    <property type="entry name" value="PRK10446.1"/>
    <property type="match status" value="1"/>
</dbReference>
<dbReference type="NCBIfam" id="TIGR00768">
    <property type="entry name" value="rimK_fam"/>
    <property type="match status" value="1"/>
</dbReference>
<dbReference type="PANTHER" id="PTHR21621:SF7">
    <property type="entry name" value="RIBOSOMAL PROTEIN BS6--L-GLUTAMATE LIGASE"/>
    <property type="match status" value="1"/>
</dbReference>
<dbReference type="PANTHER" id="PTHR21621">
    <property type="entry name" value="RIBOSOMAL PROTEIN S6 MODIFICATION PROTEIN"/>
    <property type="match status" value="1"/>
</dbReference>
<dbReference type="Pfam" id="PF08443">
    <property type="entry name" value="RimK"/>
    <property type="match status" value="1"/>
</dbReference>
<dbReference type="Pfam" id="PF18030">
    <property type="entry name" value="Rimk_N"/>
    <property type="match status" value="1"/>
</dbReference>
<dbReference type="SUPFAM" id="SSF56059">
    <property type="entry name" value="Glutathione synthetase ATP-binding domain-like"/>
    <property type="match status" value="1"/>
</dbReference>
<dbReference type="PROSITE" id="PS50975">
    <property type="entry name" value="ATP_GRASP"/>
    <property type="match status" value="1"/>
</dbReference>
<gene>
    <name evidence="1" type="primary">rimK</name>
    <name type="ordered locus">Psyr_0173</name>
</gene>